<sequence>MSMPLQRGISGVRVSDSSDDLRDSQMKDKTERARSTENNNLTLRFPFGFLFSNQSSSKHGGGGENGFSADPYSARSRHRLMLLFLKISLVLIVVIALAGSFWWTISISTSSRGHVYHNYRRLQEQLVSDLWDIGEISLGPNRWKELEYCNIESENFVPCFNVSENLALGYSNGDENDRFCGPGSKQECLELPPVKYRVPLRWPTGKDIIWHSNVKITAQEVVSSGSITKRMMMMEDDQISFRSASPMSDEVEDYSHQIAEMIGIKKDNFIEAGVRTILDIGCGYGSFGAHLLSKQILTMCIANYEASGSQVQLTLERGLPAMIGSFISKQLPYPSLSFDMLHCLRCGIDWDQKDGLLLVEIDRVLKPGGYFVWTSPLTNPRNKDHLKRWNFVHDFAESICWTLLNQQDETVVWKKTINTKCYSSRKPGVGPSVCTKGHDVESPYYRPLQMCIGGTRSRRWIPIEGRTRWPSRSNMNKTELSLYGLHPEVLGEDAENWKITVREYWSLLSPLIFSDHPKRPGDEDPSPPYNMLRNVLDMNAQFGGLNSALLEARKSVWVMNVVPTAGPNHLPMILDRGFVGVLHNWCEPFPTYPRTYDLVHADNLLSLQTSQPRKTCLLIDIFTEIDRLLRPEGWVIIRDTAQLVEKARETITQLKWEARVIEVESSSEQRLLICQKPFTKRQSI</sequence>
<gene>
    <name type="primary">QUA2</name>
    <name type="synonym">OSU1</name>
    <name type="synonym">TSD2</name>
    <name type="ordered locus">At1g78240</name>
    <name type="ORF">F3F9.21</name>
    <name type="ORF">T11I11.18</name>
</gene>
<keyword id="KW-0130">Cell adhesion</keyword>
<keyword id="KW-0961">Cell wall biogenesis/degradation</keyword>
<keyword id="KW-0325">Glycoprotein</keyword>
<keyword id="KW-0333">Golgi apparatus</keyword>
<keyword id="KW-0472">Membrane</keyword>
<keyword id="KW-0489">Methyltransferase</keyword>
<keyword id="KW-1185">Reference proteome</keyword>
<keyword id="KW-0735">Signal-anchor</keyword>
<keyword id="KW-0808">Transferase</keyword>
<keyword id="KW-0812">Transmembrane</keyword>
<keyword id="KW-1133">Transmembrane helix</keyword>
<proteinExistence type="evidence at protein level"/>
<accession>Q9C9Q8</accession>
<accession>Q0WM11</accession>
<accession>Q9M9E5</accession>
<reference key="1">
    <citation type="journal article" date="2000" name="Nature">
        <title>Sequence and analysis of chromosome 1 of the plant Arabidopsis thaliana.</title>
        <authorList>
            <person name="Theologis A."/>
            <person name="Ecker J.R."/>
            <person name="Palm C.J."/>
            <person name="Federspiel N.A."/>
            <person name="Kaul S."/>
            <person name="White O."/>
            <person name="Alonso J."/>
            <person name="Altafi H."/>
            <person name="Araujo R."/>
            <person name="Bowman C.L."/>
            <person name="Brooks S.Y."/>
            <person name="Buehler E."/>
            <person name="Chan A."/>
            <person name="Chao Q."/>
            <person name="Chen H."/>
            <person name="Cheuk R.F."/>
            <person name="Chin C.W."/>
            <person name="Chung M.K."/>
            <person name="Conn L."/>
            <person name="Conway A.B."/>
            <person name="Conway A.R."/>
            <person name="Creasy T.H."/>
            <person name="Dewar K."/>
            <person name="Dunn P."/>
            <person name="Etgu P."/>
            <person name="Feldblyum T.V."/>
            <person name="Feng J.-D."/>
            <person name="Fong B."/>
            <person name="Fujii C.Y."/>
            <person name="Gill J.E."/>
            <person name="Goldsmith A.D."/>
            <person name="Haas B."/>
            <person name="Hansen N.F."/>
            <person name="Hughes B."/>
            <person name="Huizar L."/>
            <person name="Hunter J.L."/>
            <person name="Jenkins J."/>
            <person name="Johnson-Hopson C."/>
            <person name="Khan S."/>
            <person name="Khaykin E."/>
            <person name="Kim C.J."/>
            <person name="Koo H.L."/>
            <person name="Kremenetskaia I."/>
            <person name="Kurtz D.B."/>
            <person name="Kwan A."/>
            <person name="Lam B."/>
            <person name="Langin-Hooper S."/>
            <person name="Lee A."/>
            <person name="Lee J.M."/>
            <person name="Lenz C.A."/>
            <person name="Li J.H."/>
            <person name="Li Y.-P."/>
            <person name="Lin X."/>
            <person name="Liu S.X."/>
            <person name="Liu Z.A."/>
            <person name="Luros J.S."/>
            <person name="Maiti R."/>
            <person name="Marziali A."/>
            <person name="Militscher J."/>
            <person name="Miranda M."/>
            <person name="Nguyen M."/>
            <person name="Nierman W.C."/>
            <person name="Osborne B.I."/>
            <person name="Pai G."/>
            <person name="Peterson J."/>
            <person name="Pham P.K."/>
            <person name="Rizzo M."/>
            <person name="Rooney T."/>
            <person name="Rowley D."/>
            <person name="Sakano H."/>
            <person name="Salzberg S.L."/>
            <person name="Schwartz J.R."/>
            <person name="Shinn P."/>
            <person name="Southwick A.M."/>
            <person name="Sun H."/>
            <person name="Tallon L.J."/>
            <person name="Tambunga G."/>
            <person name="Toriumi M.J."/>
            <person name="Town C.D."/>
            <person name="Utterback T."/>
            <person name="Van Aken S."/>
            <person name="Vaysberg M."/>
            <person name="Vysotskaia V.S."/>
            <person name="Walker M."/>
            <person name="Wu D."/>
            <person name="Yu G."/>
            <person name="Fraser C.M."/>
            <person name="Venter J.C."/>
            <person name="Davis R.W."/>
        </authorList>
    </citation>
    <scope>NUCLEOTIDE SEQUENCE [LARGE SCALE GENOMIC DNA]</scope>
    <source>
        <strain>cv. Columbia</strain>
    </source>
</reference>
<reference key="2">
    <citation type="journal article" date="2017" name="Plant J.">
        <title>Araport11: a complete reannotation of the Arabidopsis thaliana reference genome.</title>
        <authorList>
            <person name="Cheng C.Y."/>
            <person name="Krishnakumar V."/>
            <person name="Chan A.P."/>
            <person name="Thibaud-Nissen F."/>
            <person name="Schobel S."/>
            <person name="Town C.D."/>
        </authorList>
    </citation>
    <scope>GENOME REANNOTATION</scope>
    <source>
        <strain>cv. Columbia</strain>
    </source>
</reference>
<reference key="3">
    <citation type="submission" date="2006-07" db="EMBL/GenBank/DDBJ databases">
        <title>Large-scale analysis of RIKEN Arabidopsis full-length (RAFL) cDNAs.</title>
        <authorList>
            <person name="Totoki Y."/>
            <person name="Seki M."/>
            <person name="Ishida J."/>
            <person name="Nakajima M."/>
            <person name="Enju A."/>
            <person name="Kamiya A."/>
            <person name="Narusaka M."/>
            <person name="Shin-i T."/>
            <person name="Nakagawa M."/>
            <person name="Sakamoto N."/>
            <person name="Oishi K."/>
            <person name="Kohara Y."/>
            <person name="Kobayashi M."/>
            <person name="Toyoda A."/>
            <person name="Sakaki Y."/>
            <person name="Sakurai T."/>
            <person name="Iida K."/>
            <person name="Akiyama K."/>
            <person name="Satou M."/>
            <person name="Toyoda T."/>
            <person name="Konagaya A."/>
            <person name="Carninci P."/>
            <person name="Kawai J."/>
            <person name="Hayashizaki Y."/>
            <person name="Shinozaki K."/>
        </authorList>
    </citation>
    <scope>NUCLEOTIDE SEQUENCE [LARGE SCALE MRNA] OF 633-684</scope>
    <source>
        <strain>cv. Columbia</strain>
    </source>
</reference>
<reference key="4">
    <citation type="journal article" date="2007" name="Plant J.">
        <title>Homogalacturonan synthesis in Arabidopsis thaliana requires a Golgi-localized protein with a putative methyltransferase domain.</title>
        <authorList>
            <person name="Mouille G."/>
            <person name="Ralet M.C."/>
            <person name="Cavelier C."/>
            <person name="Eland C."/>
            <person name="Effroy D."/>
            <person name="Hematy K."/>
            <person name="McCartney L."/>
            <person name="Truong H.N."/>
            <person name="Gaudon V."/>
            <person name="Thibault J.F."/>
            <person name="Marchant A."/>
            <person name="Hofte H."/>
        </authorList>
    </citation>
    <scope>FUNCTION</scope>
    <scope>SUBCELLULAR LOCATION</scope>
    <scope>TISSUE SPECIFICITY</scope>
    <scope>DISRUPTION PHENOTYPE</scope>
</reference>
<reference key="5">
    <citation type="journal article" date="2007" name="Plant J.">
        <title>The TUMOROUS SHOOT DEVELOPMENT2 gene of Arabidopsis encoding a putative methyltransferase is required for cell adhesion and co-ordinated plant development.</title>
        <authorList>
            <person name="Krupkova E."/>
            <person name="Immerzeel P."/>
            <person name="Pauly M."/>
            <person name="Schmulling T."/>
        </authorList>
    </citation>
    <scope>FUNCTION</scope>
    <scope>SUBCELLULAR LOCATION</scope>
    <scope>TISSUE SPECIFICITY</scope>
    <scope>DISRUPTION PHENOTYPE</scope>
</reference>
<reference key="6">
    <citation type="journal article" date="2008" name="PLoS ONE">
        <title>The OSU1/QUA2/TSD2-encoded putative methyltransferase is a critical modulator of carbon and nitrogen nutrient balance response in Arabidopsis.</title>
        <authorList>
            <person name="Gao P."/>
            <person name="Xin Z."/>
            <person name="Zheng Z.L."/>
        </authorList>
    </citation>
    <scope>FUNCTION</scope>
    <scope>TISSUE SPECIFICITY</scope>
    <scope>MUTAGENESIS OF ASN-560</scope>
    <scope>DISRUPTION PHENOTYPE</scope>
</reference>
<reference key="7">
    <citation type="journal article" date="2009" name="J. Proteomics">
        <title>Phosphoproteomic analysis of nuclei-enriched fractions from Arabidopsis thaliana.</title>
        <authorList>
            <person name="Jones A.M.E."/>
            <person name="MacLean D."/>
            <person name="Studholme D.J."/>
            <person name="Serna-Sanz A."/>
            <person name="Andreasson E."/>
            <person name="Rathjen J.P."/>
            <person name="Peck S.C."/>
        </authorList>
    </citation>
    <scope>IDENTIFICATION BY MASS SPECTROMETRY [LARGE SCALE ANALYSIS]</scope>
    <source>
        <strain>cv. Columbia</strain>
    </source>
</reference>
<reference key="8">
    <citation type="journal article" date="2009" name="Plant Physiol.">
        <title>Large-scale Arabidopsis phosphoproteome profiling reveals novel chloroplast kinase substrates and phosphorylation networks.</title>
        <authorList>
            <person name="Reiland S."/>
            <person name="Messerli G."/>
            <person name="Baerenfaller K."/>
            <person name="Gerrits B."/>
            <person name="Endler A."/>
            <person name="Grossmann J."/>
            <person name="Gruissem W."/>
            <person name="Baginsky S."/>
        </authorList>
    </citation>
    <scope>IDENTIFICATION BY MASS SPECTROMETRY [LARGE SCALE ANALYSIS]</scope>
</reference>
<evidence type="ECO:0000255" key="1"/>
<evidence type="ECO:0000256" key="2">
    <source>
        <dbReference type="SAM" id="MobiDB-lite"/>
    </source>
</evidence>
<evidence type="ECO:0000269" key="3">
    <source>
    </source>
</evidence>
<evidence type="ECO:0000269" key="4">
    <source>
    </source>
</evidence>
<evidence type="ECO:0000269" key="5">
    <source>
    </source>
</evidence>
<evidence type="ECO:0000305" key="6"/>
<protein>
    <recommendedName>
        <fullName>Probable pectin methyltransferase QUA2</fullName>
        <ecNumber>2.1.1.-</ecNumber>
    </recommendedName>
    <alternativeName>
        <fullName>Protein OVERSENSITIVE TO SUGAR 1</fullName>
    </alternativeName>
    <alternativeName>
        <fullName>Protein QUASIMODO 2</fullName>
    </alternativeName>
    <alternativeName>
        <fullName>Protein TUMOROUS SHOOT DEVELOPMENT 2</fullName>
    </alternativeName>
</protein>
<dbReference type="EC" id="2.1.1.-"/>
<dbReference type="EMBL" id="AC012680">
    <property type="protein sequence ID" value="AAG52090.1"/>
    <property type="molecule type" value="Genomic_DNA"/>
</dbReference>
<dbReference type="EMBL" id="AC013430">
    <property type="protein sequence ID" value="AAF71804.1"/>
    <property type="status" value="ALT_SEQ"/>
    <property type="molecule type" value="Genomic_DNA"/>
</dbReference>
<dbReference type="EMBL" id="CP002684">
    <property type="protein sequence ID" value="AEE36085.1"/>
    <property type="molecule type" value="Genomic_DNA"/>
</dbReference>
<dbReference type="EMBL" id="CP002684">
    <property type="protein sequence ID" value="AEE36086.1"/>
    <property type="molecule type" value="Genomic_DNA"/>
</dbReference>
<dbReference type="EMBL" id="AK230024">
    <property type="protein sequence ID" value="BAF01846.1"/>
    <property type="molecule type" value="mRNA"/>
</dbReference>
<dbReference type="RefSeq" id="NP_001154475.1">
    <property type="nucleotide sequence ID" value="NM_001161003.2"/>
</dbReference>
<dbReference type="RefSeq" id="NP_177948.3">
    <property type="nucleotide sequence ID" value="NM_106474.5"/>
</dbReference>
<dbReference type="BioGRID" id="29379">
    <property type="interactions" value="1"/>
</dbReference>
<dbReference type="FunCoup" id="Q9C9Q8">
    <property type="interactions" value="2186"/>
</dbReference>
<dbReference type="IntAct" id="Q9C9Q8">
    <property type="interactions" value="1"/>
</dbReference>
<dbReference type="STRING" id="3702.Q9C9Q8"/>
<dbReference type="GlyCosmos" id="Q9C9Q8">
    <property type="glycosylation" value="2 sites, No reported glycans"/>
</dbReference>
<dbReference type="GlyGen" id="Q9C9Q8">
    <property type="glycosylation" value="3 sites"/>
</dbReference>
<dbReference type="iPTMnet" id="Q9C9Q8"/>
<dbReference type="PaxDb" id="3702-AT1G78240.1"/>
<dbReference type="ProteomicsDB" id="226286"/>
<dbReference type="EnsemblPlants" id="AT1G78240.1">
    <property type="protein sequence ID" value="AT1G78240.1"/>
    <property type="gene ID" value="AT1G78240"/>
</dbReference>
<dbReference type="EnsemblPlants" id="AT1G78240.2">
    <property type="protein sequence ID" value="AT1G78240.2"/>
    <property type="gene ID" value="AT1G78240"/>
</dbReference>
<dbReference type="GeneID" id="844160"/>
<dbReference type="Gramene" id="AT1G78240.1">
    <property type="protein sequence ID" value="AT1G78240.1"/>
    <property type="gene ID" value="AT1G78240"/>
</dbReference>
<dbReference type="Gramene" id="AT1G78240.2">
    <property type="protein sequence ID" value="AT1G78240.2"/>
    <property type="gene ID" value="AT1G78240"/>
</dbReference>
<dbReference type="KEGG" id="ath:AT1G78240"/>
<dbReference type="Araport" id="AT1G78240"/>
<dbReference type="TAIR" id="AT1G78240">
    <property type="gene designation" value="TSD2"/>
</dbReference>
<dbReference type="eggNOG" id="ENOG502QT31">
    <property type="taxonomic scope" value="Eukaryota"/>
</dbReference>
<dbReference type="HOGENOM" id="CLU_010485_2_3_1"/>
<dbReference type="InParanoid" id="Q9C9Q8"/>
<dbReference type="OMA" id="QDETAVW"/>
<dbReference type="OrthoDB" id="2013972at2759"/>
<dbReference type="PhylomeDB" id="Q9C9Q8"/>
<dbReference type="UniPathway" id="UPA00845"/>
<dbReference type="PRO" id="PR:Q9C9Q8"/>
<dbReference type="Proteomes" id="UP000006548">
    <property type="component" value="Chromosome 1"/>
</dbReference>
<dbReference type="ExpressionAtlas" id="Q9C9Q8">
    <property type="expression patterns" value="baseline and differential"/>
</dbReference>
<dbReference type="GO" id="GO:0005768">
    <property type="term" value="C:endosome"/>
    <property type="evidence" value="ECO:0007005"/>
    <property type="project" value="TAIR"/>
</dbReference>
<dbReference type="GO" id="GO:0005794">
    <property type="term" value="C:Golgi apparatus"/>
    <property type="evidence" value="ECO:0000314"/>
    <property type="project" value="TAIR"/>
</dbReference>
<dbReference type="GO" id="GO:0000139">
    <property type="term" value="C:Golgi membrane"/>
    <property type="evidence" value="ECO:0007669"/>
    <property type="project" value="UniProtKB-SubCell"/>
</dbReference>
<dbReference type="GO" id="GO:0000138">
    <property type="term" value="C:Golgi trans cisterna"/>
    <property type="evidence" value="ECO:0007005"/>
    <property type="project" value="TAIR"/>
</dbReference>
<dbReference type="GO" id="GO:0005802">
    <property type="term" value="C:trans-Golgi network"/>
    <property type="evidence" value="ECO:0007005"/>
    <property type="project" value="TAIR"/>
</dbReference>
<dbReference type="GO" id="GO:0008168">
    <property type="term" value="F:methyltransferase activity"/>
    <property type="evidence" value="ECO:0000315"/>
    <property type="project" value="TAIR"/>
</dbReference>
<dbReference type="GO" id="GO:0007155">
    <property type="term" value="P:cell adhesion"/>
    <property type="evidence" value="ECO:0007669"/>
    <property type="project" value="UniProtKB-KW"/>
</dbReference>
<dbReference type="GO" id="GO:0010289">
    <property type="term" value="P:homogalacturonan biosynthetic process"/>
    <property type="evidence" value="ECO:0000315"/>
    <property type="project" value="TAIR"/>
</dbReference>
<dbReference type="GO" id="GO:0032259">
    <property type="term" value="P:methylation"/>
    <property type="evidence" value="ECO:0007669"/>
    <property type="project" value="UniProtKB-KW"/>
</dbReference>
<dbReference type="GO" id="GO:0009735">
    <property type="term" value="P:response to cytokinin"/>
    <property type="evidence" value="ECO:0000315"/>
    <property type="project" value="TAIR"/>
</dbReference>
<dbReference type="GO" id="GO:0048364">
    <property type="term" value="P:root development"/>
    <property type="evidence" value="ECO:0000315"/>
    <property type="project" value="TAIR"/>
</dbReference>
<dbReference type="GO" id="GO:0048367">
    <property type="term" value="P:shoot system development"/>
    <property type="evidence" value="ECO:0000315"/>
    <property type="project" value="TAIR"/>
</dbReference>
<dbReference type="FunFam" id="3.40.50.150:FF:000119">
    <property type="entry name" value="probable pectin methyltransferase QUA2"/>
    <property type="match status" value="1"/>
</dbReference>
<dbReference type="Gene3D" id="3.40.50.150">
    <property type="entry name" value="Vaccinia Virus protein VP39"/>
    <property type="match status" value="1"/>
</dbReference>
<dbReference type="InterPro" id="IPR004159">
    <property type="entry name" value="Put_SAM_MeTrfase"/>
</dbReference>
<dbReference type="InterPro" id="IPR029063">
    <property type="entry name" value="SAM-dependent_MTases_sf"/>
</dbReference>
<dbReference type="PANTHER" id="PTHR10108:SF899">
    <property type="entry name" value="PECTIN METHYLTRANSFERASE QUA2-RELATED"/>
    <property type="match status" value="1"/>
</dbReference>
<dbReference type="PANTHER" id="PTHR10108">
    <property type="entry name" value="SAM-DEPENDENT METHYLTRANSFERASE"/>
    <property type="match status" value="1"/>
</dbReference>
<dbReference type="Pfam" id="PF03141">
    <property type="entry name" value="Methyltransf_29"/>
    <property type="match status" value="1"/>
</dbReference>
<dbReference type="SUPFAM" id="SSF53335">
    <property type="entry name" value="S-adenosyl-L-methionine-dependent methyltransferases"/>
    <property type="match status" value="2"/>
</dbReference>
<feature type="chain" id="PRO_0000393240" description="Probable pectin methyltransferase QUA2">
    <location>
        <begin position="1"/>
        <end position="684"/>
    </location>
</feature>
<feature type="topological domain" description="Cytoplasmic" evidence="1">
    <location>
        <begin position="1"/>
        <end position="86"/>
    </location>
</feature>
<feature type="transmembrane region" description="Helical; Signal-anchor for type II membrane protein" evidence="1">
    <location>
        <begin position="87"/>
        <end position="107"/>
    </location>
</feature>
<feature type="topological domain" description="Lumenal" evidence="1">
    <location>
        <begin position="108"/>
        <end position="684"/>
    </location>
</feature>
<feature type="region of interest" description="Disordered" evidence="2">
    <location>
        <begin position="1"/>
        <end position="35"/>
    </location>
</feature>
<feature type="compositionally biased region" description="Basic and acidic residues" evidence="2">
    <location>
        <begin position="19"/>
        <end position="35"/>
    </location>
</feature>
<feature type="glycosylation site" description="N-linked (GlcNAc...) asparagine" evidence="1">
    <location>
        <position position="161"/>
    </location>
</feature>
<feature type="glycosylation site" description="N-linked (GlcNAc...) asparagine" evidence="1">
    <location>
        <position position="476"/>
    </location>
</feature>
<feature type="mutagenesis site" description="In osu 1-2; loss of activity." evidence="5">
    <original>N</original>
    <variation>Y</variation>
    <location>
        <position position="560"/>
    </location>
</feature>
<name>PMTT_ARATH</name>
<comment type="function">
    <text evidence="3 4 5">May be involved in the synthesis of homogalacturonan. Required for normal cell adhesion and plant development.</text>
</comment>
<comment type="pathway">
    <text>Glycan metabolism; pectin biosynthesis.</text>
</comment>
<comment type="subcellular location">
    <subcellularLocation>
        <location evidence="3 4">Golgi apparatus membrane</location>
        <topology evidence="3 4">Single-pass type II membrane protein</topology>
    </subcellularLocation>
</comment>
<comment type="tissue specificity">
    <text evidence="3 4 5">Ubiquitous.</text>
</comment>
<comment type="disruption phenotype">
    <text evidence="3 4 5">Deformed dwarf phenotype and reduced cell adhesion. Hypersensitive to imbalanced C:N ratio.</text>
</comment>
<comment type="miscellaneous">
    <text>Co-expressed with the galacturonosyltransferase GAUT8/QUASIMODO1.</text>
</comment>
<comment type="similarity">
    <text evidence="6">Belongs to the methyltransferase superfamily.</text>
</comment>
<comment type="sequence caution" evidence="6">
    <conflict type="erroneous gene model prediction">
        <sequence resource="EMBL-CDS" id="AAF71804"/>
    </conflict>
</comment>
<organism>
    <name type="scientific">Arabidopsis thaliana</name>
    <name type="common">Mouse-ear cress</name>
    <dbReference type="NCBI Taxonomy" id="3702"/>
    <lineage>
        <taxon>Eukaryota</taxon>
        <taxon>Viridiplantae</taxon>
        <taxon>Streptophyta</taxon>
        <taxon>Embryophyta</taxon>
        <taxon>Tracheophyta</taxon>
        <taxon>Spermatophyta</taxon>
        <taxon>Magnoliopsida</taxon>
        <taxon>eudicotyledons</taxon>
        <taxon>Gunneridae</taxon>
        <taxon>Pentapetalae</taxon>
        <taxon>rosids</taxon>
        <taxon>malvids</taxon>
        <taxon>Brassicales</taxon>
        <taxon>Brassicaceae</taxon>
        <taxon>Camelineae</taxon>
        <taxon>Arabidopsis</taxon>
    </lineage>
</organism>